<dbReference type="EC" id="2.4.1.221" evidence="2"/>
<dbReference type="EMBL" id="AJ784816">
    <property type="protein sequence ID" value="CAH04945.1"/>
    <property type="molecule type" value="mRNA"/>
</dbReference>
<dbReference type="RefSeq" id="NP_001002904.1">
    <property type="nucleotide sequence ID" value="NM_001002904.2"/>
</dbReference>
<dbReference type="SMR" id="Q6A1G2"/>
<dbReference type="FunCoup" id="Q6A1G2">
    <property type="interactions" value="1968"/>
</dbReference>
<dbReference type="CAZy" id="GT10">
    <property type="family name" value="Glycosyltransferase Family 10"/>
</dbReference>
<dbReference type="GlyCosmos" id="Q6A1G2">
    <property type="glycosylation" value="4 sites, No reported glycans"/>
</dbReference>
<dbReference type="PaxDb" id="8364-ENSXETP00000033891"/>
<dbReference type="GeneID" id="444888"/>
<dbReference type="KEGG" id="xtr:444888"/>
<dbReference type="AGR" id="Xenbase:XB-GENE-5933996"/>
<dbReference type="CTD" id="170384"/>
<dbReference type="Xenbase" id="XB-GENE-5933996">
    <property type="gene designation" value="fut11"/>
</dbReference>
<dbReference type="eggNOG" id="KOG2619">
    <property type="taxonomic scope" value="Eukaryota"/>
</dbReference>
<dbReference type="HOGENOM" id="CLU_032075_0_1_1"/>
<dbReference type="InParanoid" id="Q6A1G2"/>
<dbReference type="OMA" id="EHREWGV"/>
<dbReference type="OrthoDB" id="9993460at2759"/>
<dbReference type="PhylomeDB" id="Q6A1G2"/>
<dbReference type="TreeFam" id="TF316348"/>
<dbReference type="Reactome" id="R-XTR-9037629">
    <property type="pathway name" value="Lewis blood group biosynthesis"/>
</dbReference>
<dbReference type="UniPathway" id="UPA00378"/>
<dbReference type="Proteomes" id="UP000008143">
    <property type="component" value="Chromosome 1"/>
</dbReference>
<dbReference type="Bgee" id="ENSXETG00000015541">
    <property type="expression patterns" value="Expressed in heart and 12 other cell types or tissues"/>
</dbReference>
<dbReference type="ExpressionAtlas" id="Q6A1G2">
    <property type="expression patterns" value="differential"/>
</dbReference>
<dbReference type="GO" id="GO:0005783">
    <property type="term" value="C:endoplasmic reticulum"/>
    <property type="evidence" value="ECO:0000250"/>
    <property type="project" value="UniProtKB"/>
</dbReference>
<dbReference type="GO" id="GO:0005789">
    <property type="term" value="C:endoplasmic reticulum membrane"/>
    <property type="evidence" value="ECO:0007669"/>
    <property type="project" value="UniProtKB-SubCell"/>
</dbReference>
<dbReference type="GO" id="GO:0000139">
    <property type="term" value="C:Golgi membrane"/>
    <property type="evidence" value="ECO:0007669"/>
    <property type="project" value="InterPro"/>
</dbReference>
<dbReference type="GO" id="GO:0046920">
    <property type="term" value="F:alpha-(1-&gt;3)-fucosyltransferase activity"/>
    <property type="evidence" value="ECO:0007669"/>
    <property type="project" value="InterPro"/>
</dbReference>
<dbReference type="GO" id="GO:0046922">
    <property type="term" value="F:peptide-O-fucosyltransferase activity"/>
    <property type="evidence" value="ECO:0000250"/>
    <property type="project" value="UniProtKB"/>
</dbReference>
<dbReference type="GO" id="GO:0050714">
    <property type="term" value="P:positive regulation of protein secretion"/>
    <property type="evidence" value="ECO:0000250"/>
    <property type="project" value="UniProtKB"/>
</dbReference>
<dbReference type="FunFam" id="3.40.50.11660:FF:000002">
    <property type="entry name" value="Alpha-(1,3)-fucosyltransferase"/>
    <property type="match status" value="1"/>
</dbReference>
<dbReference type="Gene3D" id="3.40.50.11660">
    <property type="entry name" value="Glycosyl transferase family 10, C-terminal domain"/>
    <property type="match status" value="1"/>
</dbReference>
<dbReference type="InterPro" id="IPR017176">
    <property type="entry name" value="Alpha-1_3-FUT_met"/>
</dbReference>
<dbReference type="InterPro" id="IPR055270">
    <property type="entry name" value="Glyco_tran_10_C"/>
</dbReference>
<dbReference type="InterPro" id="IPR031481">
    <property type="entry name" value="Glyco_tran_10_N"/>
</dbReference>
<dbReference type="InterPro" id="IPR001503">
    <property type="entry name" value="Glyco_trans_10"/>
</dbReference>
<dbReference type="InterPro" id="IPR038577">
    <property type="entry name" value="GT10-like_C_sf"/>
</dbReference>
<dbReference type="PANTHER" id="PTHR11929">
    <property type="entry name" value="ALPHA- 1,3 -FUCOSYLTRANSFERASE"/>
    <property type="match status" value="1"/>
</dbReference>
<dbReference type="PANTHER" id="PTHR11929:SF198">
    <property type="entry name" value="ALPHA-(1,3)-FUCOSYLTRANSFERASE 11"/>
    <property type="match status" value="1"/>
</dbReference>
<dbReference type="Pfam" id="PF17039">
    <property type="entry name" value="Glyco_tran_10_N"/>
    <property type="match status" value="1"/>
</dbReference>
<dbReference type="Pfam" id="PF00852">
    <property type="entry name" value="Glyco_transf_10"/>
    <property type="match status" value="1"/>
</dbReference>
<dbReference type="PIRSF" id="PIRSF037332">
    <property type="entry name" value="Alpha1_3FUT_met"/>
    <property type="match status" value="1"/>
</dbReference>
<dbReference type="SUPFAM" id="SSF53756">
    <property type="entry name" value="UDP-Glycosyltransferase/glycogen phosphorylase"/>
    <property type="match status" value="1"/>
</dbReference>
<evidence type="ECO:0000250" key="1">
    <source>
        <dbReference type="UniProtKB" id="Q11130"/>
    </source>
</evidence>
<evidence type="ECO:0000250" key="2">
    <source>
        <dbReference type="UniProtKB" id="Q495W5"/>
    </source>
</evidence>
<evidence type="ECO:0000255" key="3"/>
<evidence type="ECO:0000305" key="4"/>
<protein>
    <recommendedName>
        <fullName>GDP-fucose protein O-fucosyltransferase 4</fullName>
        <ecNumber evidence="2">2.4.1.221</ecNumber>
    </recommendedName>
    <alternativeName>
        <fullName>Fucosyltransferase XI</fullName>
        <shortName>Fuc-TXI</shortName>
        <shortName>FucT-XI</shortName>
    </alternativeName>
    <alternativeName>
        <fullName>Galactoside 3-L-fucosyltransferase 11</fullName>
        <shortName>Fucosyltransferase 11</shortName>
    </alternativeName>
</protein>
<comment type="function">
    <text evidence="2">Protein O-fucosyltransferase that specifically catalyzes O-fucosylation of serine or threonine residues in EMI domains of target proteins. Attaches fucose through an O-glycosidic linkage. O-fucosylation of EMI domain-containing proteins may be required for facilitating protein folding and secretion.</text>
</comment>
<comment type="catalytic activity">
    <reaction evidence="2">
        <text>L-threonyl-[protein] + GDP-beta-L-fucose = 3-O-(alpha-L-fucosyl)-L-threonyl-[protein] + GDP + H(+)</text>
        <dbReference type="Rhea" id="RHEA:70491"/>
        <dbReference type="Rhea" id="RHEA-COMP:11060"/>
        <dbReference type="Rhea" id="RHEA-COMP:17915"/>
        <dbReference type="ChEBI" id="CHEBI:15378"/>
        <dbReference type="ChEBI" id="CHEBI:30013"/>
        <dbReference type="ChEBI" id="CHEBI:57273"/>
        <dbReference type="ChEBI" id="CHEBI:58189"/>
        <dbReference type="ChEBI" id="CHEBI:189631"/>
        <dbReference type="EC" id="2.4.1.221"/>
    </reaction>
    <physiologicalReaction direction="left-to-right" evidence="2">
        <dbReference type="Rhea" id="RHEA:70492"/>
    </physiologicalReaction>
</comment>
<comment type="catalytic activity">
    <reaction evidence="2">
        <text>L-seryl-[protein] + GDP-beta-L-fucose = 3-O-(alpha-L-fucosyl)-L-seryl-[protein] + GDP + H(+)</text>
        <dbReference type="Rhea" id="RHEA:63644"/>
        <dbReference type="Rhea" id="RHEA-COMP:9863"/>
        <dbReference type="Rhea" id="RHEA-COMP:17914"/>
        <dbReference type="ChEBI" id="CHEBI:15378"/>
        <dbReference type="ChEBI" id="CHEBI:29999"/>
        <dbReference type="ChEBI" id="CHEBI:57273"/>
        <dbReference type="ChEBI" id="CHEBI:58189"/>
        <dbReference type="ChEBI" id="CHEBI:189632"/>
        <dbReference type="EC" id="2.4.1.221"/>
    </reaction>
    <physiologicalReaction direction="left-to-right" evidence="2">
        <dbReference type="Rhea" id="RHEA:63645"/>
    </physiologicalReaction>
</comment>
<comment type="pathway">
    <text evidence="2">Protein modification; protein glycosylation.</text>
</comment>
<comment type="subcellular location">
    <subcellularLocation>
        <location evidence="2">Endoplasmic reticulum membrane</location>
        <topology evidence="3">Single-pass type II membrane protein</topology>
    </subcellularLocation>
</comment>
<comment type="similarity">
    <text evidence="4">Belongs to the glycosyltransferase 10 family.</text>
</comment>
<reference key="1">
    <citation type="submission" date="2004-07" db="EMBL/GenBank/DDBJ databases">
        <title>Phylogeny of fucosyltransferases.</title>
        <authorList>
            <person name="Martinez-Duncker I."/>
            <person name="Oriol R."/>
            <person name="Mollicone R."/>
        </authorList>
    </citation>
    <scope>NUCLEOTIDE SEQUENCE [MRNA]</scope>
</reference>
<name>OFUT4_XENTR</name>
<sequence>MSAGCTQLVWGGRLHWGASHLLSCLLALCALWVLAAAEPTEGGSANVQGVGEAALYQGRGQHRVPSEDNVAVLSDQWEPSSFQPSSAFSGTDLGTMVADSYRGPGNSDRRSNKELPILLWWSENLFPHFPGDAERIDCPLSSCMVTKNKSVKLHKRTKSIIFYGTDFRAYEAPLPRLPHQTWALFHEESPMNNYVLSHLPGIRLFNYTATFSRESDYPLTLQWLPTIGYLHNPALSMAEKNRWRKNGYAPVLYMQSHCDVPSDRDRYVKELMKHLEIDSYGQCMKNREHPNKRLEDTSTATTEDPEFMAFTARYKFHLAMENAICADYMTEKLWRPMHLGAIPIYRGSPSVRDWMPNNHSIIMIDDFASPKELAEFIMTLDSDDEQYLKYLEYKKPGGTTNTFLLSSMEKREWGVNDMTAPNYLNGFECFVCDKENSRIKAEKTYKKSQQGGAAPEPHIADFNHMGCPMPTPGFGSAQEIPESDSWKQMWLQDYWQSFDQGEALTAMIQRNETNQDRFWDYMHETYIKRSMNH</sequence>
<proteinExistence type="evidence at transcript level"/>
<feature type="chain" id="PRO_0000299016" description="GDP-fucose protein O-fucosyltransferase 4">
    <location>
        <begin position="1"/>
        <end position="533"/>
    </location>
</feature>
<feature type="topological domain" description="Cytoplasmic" evidence="3">
    <location>
        <begin position="1"/>
        <end position="20"/>
    </location>
</feature>
<feature type="transmembrane region" description="Helical; Signal-anchor for type II membrane protein" evidence="3">
    <location>
        <begin position="21"/>
        <end position="37"/>
    </location>
</feature>
<feature type="topological domain" description="Lumenal" evidence="3">
    <location>
        <begin position="38"/>
        <end position="533"/>
    </location>
</feature>
<feature type="glycosylation site" description="N-linked (GlcNAc...) asparagine" evidence="3">
    <location>
        <position position="148"/>
    </location>
</feature>
<feature type="glycosylation site" description="N-linked (GlcNAc...) asparagine" evidence="3">
    <location>
        <position position="206"/>
    </location>
</feature>
<feature type="glycosylation site" description="N-linked (GlcNAc...) asparagine" evidence="3">
    <location>
        <position position="358"/>
    </location>
</feature>
<feature type="glycosylation site" description="N-linked (GlcNAc...) asparagine" evidence="3">
    <location>
        <position position="511"/>
    </location>
</feature>
<feature type="disulfide bond" evidence="1">
    <location>
        <begin position="429"/>
        <end position="432"/>
    </location>
</feature>
<organism>
    <name type="scientific">Xenopus tropicalis</name>
    <name type="common">Western clawed frog</name>
    <name type="synonym">Silurana tropicalis</name>
    <dbReference type="NCBI Taxonomy" id="8364"/>
    <lineage>
        <taxon>Eukaryota</taxon>
        <taxon>Metazoa</taxon>
        <taxon>Chordata</taxon>
        <taxon>Craniata</taxon>
        <taxon>Vertebrata</taxon>
        <taxon>Euteleostomi</taxon>
        <taxon>Amphibia</taxon>
        <taxon>Batrachia</taxon>
        <taxon>Anura</taxon>
        <taxon>Pipoidea</taxon>
        <taxon>Pipidae</taxon>
        <taxon>Xenopodinae</taxon>
        <taxon>Xenopus</taxon>
        <taxon>Silurana</taxon>
    </lineage>
</organism>
<accession>Q6A1G2</accession>
<keyword id="KW-1015">Disulfide bond</keyword>
<keyword id="KW-0256">Endoplasmic reticulum</keyword>
<keyword id="KW-0325">Glycoprotein</keyword>
<keyword id="KW-0328">Glycosyltransferase</keyword>
<keyword id="KW-0472">Membrane</keyword>
<keyword id="KW-1185">Reference proteome</keyword>
<keyword id="KW-0735">Signal-anchor</keyword>
<keyword id="KW-0808">Transferase</keyword>
<keyword id="KW-0812">Transmembrane</keyword>
<keyword id="KW-1133">Transmembrane helix</keyword>
<gene>
    <name type="primary">fut11</name>
    <name evidence="2" type="synonym">pofut4</name>
</gene>